<organism>
    <name type="scientific">Salmonella heidelberg (strain SL476)</name>
    <dbReference type="NCBI Taxonomy" id="454169"/>
    <lineage>
        <taxon>Bacteria</taxon>
        <taxon>Pseudomonadati</taxon>
        <taxon>Pseudomonadota</taxon>
        <taxon>Gammaproteobacteria</taxon>
        <taxon>Enterobacterales</taxon>
        <taxon>Enterobacteriaceae</taxon>
        <taxon>Salmonella</taxon>
    </lineage>
</organism>
<evidence type="ECO:0000255" key="1">
    <source>
        <dbReference type="HAMAP-Rule" id="MF_01417"/>
    </source>
</evidence>
<accession>B4THH1</accession>
<comment type="function">
    <text evidence="1">Catalyzes the biosynthesis of agmatine from arginine.</text>
</comment>
<comment type="catalytic activity">
    <reaction evidence="1">
        <text>L-arginine + H(+) = agmatine + CO2</text>
        <dbReference type="Rhea" id="RHEA:17641"/>
        <dbReference type="ChEBI" id="CHEBI:15378"/>
        <dbReference type="ChEBI" id="CHEBI:16526"/>
        <dbReference type="ChEBI" id="CHEBI:32682"/>
        <dbReference type="ChEBI" id="CHEBI:58145"/>
        <dbReference type="EC" id="4.1.1.19"/>
    </reaction>
</comment>
<comment type="cofactor">
    <cofactor evidence="1">
        <name>Mg(2+)</name>
        <dbReference type="ChEBI" id="CHEBI:18420"/>
    </cofactor>
</comment>
<comment type="cofactor">
    <cofactor evidence="1">
        <name>pyridoxal 5'-phosphate</name>
        <dbReference type="ChEBI" id="CHEBI:597326"/>
    </cofactor>
</comment>
<comment type="pathway">
    <text evidence="1">Amine and polyamine biosynthesis; agmatine biosynthesis; agmatine from L-arginine: step 1/1.</text>
</comment>
<comment type="similarity">
    <text evidence="1">Belongs to the Orn/Lys/Arg decarboxylase class-II family. SpeA subfamily.</text>
</comment>
<name>SPEA_SALHS</name>
<dbReference type="EC" id="4.1.1.19" evidence="1"/>
<dbReference type="EMBL" id="CP001120">
    <property type="protein sequence ID" value="ACF69056.1"/>
    <property type="molecule type" value="Genomic_DNA"/>
</dbReference>
<dbReference type="SMR" id="B4THH1"/>
<dbReference type="KEGG" id="seh:SeHA_C3325"/>
<dbReference type="HOGENOM" id="CLU_027243_1_0_6"/>
<dbReference type="UniPathway" id="UPA00186">
    <property type="reaction ID" value="UER00284"/>
</dbReference>
<dbReference type="Proteomes" id="UP000001866">
    <property type="component" value="Chromosome"/>
</dbReference>
<dbReference type="GO" id="GO:0008792">
    <property type="term" value="F:arginine decarboxylase activity"/>
    <property type="evidence" value="ECO:0007669"/>
    <property type="project" value="UniProtKB-UniRule"/>
</dbReference>
<dbReference type="GO" id="GO:0046872">
    <property type="term" value="F:metal ion binding"/>
    <property type="evidence" value="ECO:0007669"/>
    <property type="project" value="UniProtKB-KW"/>
</dbReference>
<dbReference type="GO" id="GO:0006527">
    <property type="term" value="P:arginine catabolic process"/>
    <property type="evidence" value="ECO:0007669"/>
    <property type="project" value="InterPro"/>
</dbReference>
<dbReference type="GO" id="GO:0033388">
    <property type="term" value="P:putrescine biosynthetic process from arginine"/>
    <property type="evidence" value="ECO:0007669"/>
    <property type="project" value="TreeGrafter"/>
</dbReference>
<dbReference type="GO" id="GO:0008295">
    <property type="term" value="P:spermidine biosynthetic process"/>
    <property type="evidence" value="ECO:0007669"/>
    <property type="project" value="UniProtKB-UniRule"/>
</dbReference>
<dbReference type="CDD" id="cd06830">
    <property type="entry name" value="PLPDE_III_ADC"/>
    <property type="match status" value="1"/>
</dbReference>
<dbReference type="FunFam" id="1.10.287.3440:FF:000001">
    <property type="entry name" value="Biosynthetic arginine decarboxylase"/>
    <property type="match status" value="1"/>
</dbReference>
<dbReference type="FunFam" id="1.20.58.930:FF:000001">
    <property type="entry name" value="Biosynthetic arginine decarboxylase"/>
    <property type="match status" value="1"/>
</dbReference>
<dbReference type="FunFam" id="2.40.37.10:FF:000001">
    <property type="entry name" value="Biosynthetic arginine decarboxylase"/>
    <property type="match status" value="1"/>
</dbReference>
<dbReference type="FunFam" id="3.20.20.10:FF:000001">
    <property type="entry name" value="Biosynthetic arginine decarboxylase"/>
    <property type="match status" value="1"/>
</dbReference>
<dbReference type="Gene3D" id="1.10.287.3440">
    <property type="match status" value="1"/>
</dbReference>
<dbReference type="Gene3D" id="1.20.58.930">
    <property type="match status" value="1"/>
</dbReference>
<dbReference type="Gene3D" id="3.20.20.10">
    <property type="entry name" value="Alanine racemase"/>
    <property type="match status" value="1"/>
</dbReference>
<dbReference type="Gene3D" id="2.40.37.10">
    <property type="entry name" value="Lyase, Ornithine Decarboxylase, Chain A, domain 1"/>
    <property type="match status" value="1"/>
</dbReference>
<dbReference type="HAMAP" id="MF_01417">
    <property type="entry name" value="SpeA"/>
    <property type="match status" value="1"/>
</dbReference>
<dbReference type="InterPro" id="IPR009006">
    <property type="entry name" value="Ala_racemase/Decarboxylase_C"/>
</dbReference>
<dbReference type="InterPro" id="IPR040634">
    <property type="entry name" value="Arg_decarb_HB"/>
</dbReference>
<dbReference type="InterPro" id="IPR041128">
    <property type="entry name" value="Arg_decarbox_C"/>
</dbReference>
<dbReference type="InterPro" id="IPR002985">
    <property type="entry name" value="Arg_decrbxlase"/>
</dbReference>
<dbReference type="InterPro" id="IPR022657">
    <property type="entry name" value="De-COase2_CS"/>
</dbReference>
<dbReference type="InterPro" id="IPR022644">
    <property type="entry name" value="De-COase2_N"/>
</dbReference>
<dbReference type="InterPro" id="IPR022653">
    <property type="entry name" value="De-COase2_pyr-phos_BS"/>
</dbReference>
<dbReference type="InterPro" id="IPR000183">
    <property type="entry name" value="Orn/DAP/Arg_de-COase"/>
</dbReference>
<dbReference type="InterPro" id="IPR029066">
    <property type="entry name" value="PLP-binding_barrel"/>
</dbReference>
<dbReference type="NCBIfam" id="NF003763">
    <property type="entry name" value="PRK05354.1"/>
    <property type="match status" value="1"/>
</dbReference>
<dbReference type="NCBIfam" id="TIGR01273">
    <property type="entry name" value="speA"/>
    <property type="match status" value="1"/>
</dbReference>
<dbReference type="PANTHER" id="PTHR43295">
    <property type="entry name" value="ARGININE DECARBOXYLASE"/>
    <property type="match status" value="1"/>
</dbReference>
<dbReference type="PANTHER" id="PTHR43295:SF9">
    <property type="entry name" value="BIOSYNTHETIC ARGININE DECARBOXYLASE"/>
    <property type="match status" value="1"/>
</dbReference>
<dbReference type="Pfam" id="PF17810">
    <property type="entry name" value="Arg_decarb_HB"/>
    <property type="match status" value="1"/>
</dbReference>
<dbReference type="Pfam" id="PF17944">
    <property type="entry name" value="Arg_decarbox_C"/>
    <property type="match status" value="1"/>
</dbReference>
<dbReference type="Pfam" id="PF02784">
    <property type="entry name" value="Orn_Arg_deC_N"/>
    <property type="match status" value="1"/>
</dbReference>
<dbReference type="PIRSF" id="PIRSF001336">
    <property type="entry name" value="Arg_decrbxlase"/>
    <property type="match status" value="1"/>
</dbReference>
<dbReference type="PRINTS" id="PR01180">
    <property type="entry name" value="ARGDCRBXLASE"/>
</dbReference>
<dbReference type="PRINTS" id="PR01179">
    <property type="entry name" value="ODADCRBXLASE"/>
</dbReference>
<dbReference type="SUPFAM" id="SSF50621">
    <property type="entry name" value="Alanine racemase C-terminal domain-like"/>
    <property type="match status" value="1"/>
</dbReference>
<dbReference type="SUPFAM" id="SSF51419">
    <property type="entry name" value="PLP-binding barrel"/>
    <property type="match status" value="1"/>
</dbReference>
<dbReference type="PROSITE" id="PS00878">
    <property type="entry name" value="ODR_DC_2_1"/>
    <property type="match status" value="1"/>
</dbReference>
<dbReference type="PROSITE" id="PS00879">
    <property type="entry name" value="ODR_DC_2_2"/>
    <property type="match status" value="1"/>
</dbReference>
<feature type="chain" id="PRO_1000145600" description="Biosynthetic arginine decarboxylase">
    <location>
        <begin position="1"/>
        <end position="632"/>
    </location>
</feature>
<feature type="binding site" evidence="1">
    <location>
        <begin position="281"/>
        <end position="291"/>
    </location>
    <ligand>
        <name>substrate</name>
    </ligand>
</feature>
<feature type="modified residue" description="N6-(pyridoxal phosphate)lysine" evidence="1">
    <location>
        <position position="101"/>
    </location>
</feature>
<gene>
    <name evidence="1" type="primary">speA</name>
    <name type="ordered locus">SeHA_C3325</name>
</gene>
<keyword id="KW-0210">Decarboxylase</keyword>
<keyword id="KW-0456">Lyase</keyword>
<keyword id="KW-0460">Magnesium</keyword>
<keyword id="KW-0479">Metal-binding</keyword>
<keyword id="KW-0620">Polyamine biosynthesis</keyword>
<keyword id="KW-0661">Putrescine biosynthesis</keyword>
<keyword id="KW-0663">Pyridoxal phosphate</keyword>
<keyword id="KW-0745">Spermidine biosynthesis</keyword>
<reference key="1">
    <citation type="journal article" date="2011" name="J. Bacteriol.">
        <title>Comparative genomics of 28 Salmonella enterica isolates: evidence for CRISPR-mediated adaptive sublineage evolution.</title>
        <authorList>
            <person name="Fricke W.F."/>
            <person name="Mammel M.K."/>
            <person name="McDermott P.F."/>
            <person name="Tartera C."/>
            <person name="White D.G."/>
            <person name="Leclerc J.E."/>
            <person name="Ravel J."/>
            <person name="Cebula T.A."/>
        </authorList>
    </citation>
    <scope>NUCLEOTIDE SEQUENCE [LARGE SCALE GENOMIC DNA]</scope>
    <source>
        <strain>SL476</strain>
    </source>
</reference>
<proteinExistence type="inferred from homology"/>
<protein>
    <recommendedName>
        <fullName evidence="1">Biosynthetic arginine decarboxylase</fullName>
        <shortName evidence="1">ADC</shortName>
        <ecNumber evidence="1">4.1.1.19</ecNumber>
    </recommendedName>
</protein>
<sequence length="632" mass="71163">MSSQEASKMLRTYNIAWWGNNYYDVNELGHISVCPDPDVPEARVDLAKLVKAREAQGQRLPALFCFPQILQHRLRSINAAFKRARESYGYNGDYFLVYPIKVNQHRRVIESLIHSGEPLGLEAGSKAELMAVLAHAGMTRSVIVCNGYKDREYIRLALIGEKMGHKVYLVIEKMSEIAIVLEEAERLNVVPRLGVRARLASQGSGKWQSSGGEKSKFGLAATQVLQLVETLRDAGRLDSLQLLHFHLGSQMANIRDIATGVRESARFYVELHKLGVNIQCFDVGGGLGVDYEGTRSQSDCSVNYGLNEYANNIIWAIGDACEEHGLPHPTVITESGRAVTAHHTVLVSNIIGVERNEYTDPTAPAEDAPRALQNLWETWQEMHKPGTRRSLREWLHDSQMDLHDIHIGYSSGAFSLQERAWAEQLYLSMCHEVQKQLDPQNRAHRPIIDELQERMADKMYVNFSLFQSMPDAWGIDQLFPVLPLEGLDQVPERRAVLLDITCDSDGAIDHYIDGDGIATTMPMPEYDPENPPMLGFFMVGAYQEILGNMHNLFGDTEAVDVFVFPDGSVEVELSDEGDTVADMLQYVQLDPKTLLTHFRDQVKQTDLDDALQQQFLEEFEAGLYGYTYLEDE</sequence>